<reference key="1">
    <citation type="journal article" date="2009" name="PLoS Genet.">
        <title>Organised genome dynamics in the Escherichia coli species results in highly diverse adaptive paths.</title>
        <authorList>
            <person name="Touchon M."/>
            <person name="Hoede C."/>
            <person name="Tenaillon O."/>
            <person name="Barbe V."/>
            <person name="Baeriswyl S."/>
            <person name="Bidet P."/>
            <person name="Bingen E."/>
            <person name="Bonacorsi S."/>
            <person name="Bouchier C."/>
            <person name="Bouvet O."/>
            <person name="Calteau A."/>
            <person name="Chiapello H."/>
            <person name="Clermont O."/>
            <person name="Cruveiller S."/>
            <person name="Danchin A."/>
            <person name="Diard M."/>
            <person name="Dossat C."/>
            <person name="Karoui M.E."/>
            <person name="Frapy E."/>
            <person name="Garry L."/>
            <person name="Ghigo J.M."/>
            <person name="Gilles A.M."/>
            <person name="Johnson J."/>
            <person name="Le Bouguenec C."/>
            <person name="Lescat M."/>
            <person name="Mangenot S."/>
            <person name="Martinez-Jehanne V."/>
            <person name="Matic I."/>
            <person name="Nassif X."/>
            <person name="Oztas S."/>
            <person name="Petit M.A."/>
            <person name="Pichon C."/>
            <person name="Rouy Z."/>
            <person name="Ruf C.S."/>
            <person name="Schneider D."/>
            <person name="Tourret J."/>
            <person name="Vacherie B."/>
            <person name="Vallenet D."/>
            <person name="Medigue C."/>
            <person name="Rocha E.P.C."/>
            <person name="Denamur E."/>
        </authorList>
    </citation>
    <scope>NUCLEOTIDE SEQUENCE [LARGE SCALE GENOMIC DNA]</scope>
    <source>
        <strain>IAI1</strain>
    </source>
</reference>
<evidence type="ECO:0000255" key="1">
    <source>
        <dbReference type="HAMAP-Rule" id="MF_01637"/>
    </source>
</evidence>
<gene>
    <name evidence="1" type="primary">nfuA</name>
    <name type="ordered locus">ECIAI1_3558</name>
</gene>
<sequence length="191" mass="20998">MIRISDAAQAHFAKLLANQEEGTQIRVFVINPGTPNAECGVSYCPPDAVEATDTALKFDLLTAYVDELSAPYLEDAEIDFVTDQLGSQLTLKAPNAKMRKVADDAPLMERVEYMLQSQINPQLAGHGGRVSLMEITEDGYAILQFGGGCNGCSMVDVTLKEGIEKQLLNEFPELKGVRDLTEHQRGEHSYY</sequence>
<organism>
    <name type="scientific">Escherichia coli O8 (strain IAI1)</name>
    <dbReference type="NCBI Taxonomy" id="585034"/>
    <lineage>
        <taxon>Bacteria</taxon>
        <taxon>Pseudomonadati</taxon>
        <taxon>Pseudomonadota</taxon>
        <taxon>Gammaproteobacteria</taxon>
        <taxon>Enterobacterales</taxon>
        <taxon>Enterobacteriaceae</taxon>
        <taxon>Escherichia</taxon>
    </lineage>
</organism>
<feature type="chain" id="PRO_1000186748" description="Fe/S biogenesis protein NfuA">
    <location>
        <begin position="1"/>
        <end position="191"/>
    </location>
</feature>
<feature type="binding site" evidence="1">
    <location>
        <position position="149"/>
    </location>
    <ligand>
        <name>[4Fe-4S] cluster</name>
        <dbReference type="ChEBI" id="CHEBI:49883"/>
    </ligand>
</feature>
<feature type="binding site" evidence="1">
    <location>
        <position position="152"/>
    </location>
    <ligand>
        <name>[4Fe-4S] cluster</name>
        <dbReference type="ChEBI" id="CHEBI:49883"/>
    </ligand>
</feature>
<protein>
    <recommendedName>
        <fullName evidence="1">Fe/S biogenesis protein NfuA</fullName>
    </recommendedName>
</protein>
<proteinExistence type="inferred from homology"/>
<name>NFUA_ECO8A</name>
<dbReference type="EMBL" id="CU928160">
    <property type="protein sequence ID" value="CAR00357.1"/>
    <property type="molecule type" value="Genomic_DNA"/>
</dbReference>
<dbReference type="RefSeq" id="WP_000619389.1">
    <property type="nucleotide sequence ID" value="NC_011741.1"/>
</dbReference>
<dbReference type="SMR" id="B7M1X0"/>
<dbReference type="GeneID" id="93778582"/>
<dbReference type="KEGG" id="ecr:ECIAI1_3558"/>
<dbReference type="HOGENOM" id="CLU_094569_0_0_6"/>
<dbReference type="GO" id="GO:0051539">
    <property type="term" value="F:4 iron, 4 sulfur cluster binding"/>
    <property type="evidence" value="ECO:0007669"/>
    <property type="project" value="UniProtKB-UniRule"/>
</dbReference>
<dbReference type="GO" id="GO:0005506">
    <property type="term" value="F:iron ion binding"/>
    <property type="evidence" value="ECO:0007669"/>
    <property type="project" value="InterPro"/>
</dbReference>
<dbReference type="GO" id="GO:0016226">
    <property type="term" value="P:iron-sulfur cluster assembly"/>
    <property type="evidence" value="ECO:0007669"/>
    <property type="project" value="UniProtKB-UniRule"/>
</dbReference>
<dbReference type="GO" id="GO:0051604">
    <property type="term" value="P:protein maturation"/>
    <property type="evidence" value="ECO:0007669"/>
    <property type="project" value="UniProtKB-UniRule"/>
</dbReference>
<dbReference type="FunFam" id="2.60.300.12:FF:000004">
    <property type="entry name" value="Fe/S biogenesis protein NfuA"/>
    <property type="match status" value="1"/>
</dbReference>
<dbReference type="FunFam" id="3.30.300.130:FF:000002">
    <property type="entry name" value="Fe/S biogenesis protein NfuA"/>
    <property type="match status" value="1"/>
</dbReference>
<dbReference type="Gene3D" id="3.30.300.130">
    <property type="entry name" value="Fe-S cluster assembly (FSCA)"/>
    <property type="match status" value="1"/>
</dbReference>
<dbReference type="Gene3D" id="2.60.300.12">
    <property type="entry name" value="HesB-like domain"/>
    <property type="match status" value="1"/>
</dbReference>
<dbReference type="HAMAP" id="MF_01637">
    <property type="entry name" value="Fe_S_biogen_NfuA"/>
    <property type="match status" value="1"/>
</dbReference>
<dbReference type="InterPro" id="IPR017726">
    <property type="entry name" value="Fe/S_biogenesis_protein_NfuA"/>
</dbReference>
<dbReference type="InterPro" id="IPR000361">
    <property type="entry name" value="FeS_biogenesis"/>
</dbReference>
<dbReference type="InterPro" id="IPR034904">
    <property type="entry name" value="FSCA_dom_sf"/>
</dbReference>
<dbReference type="InterPro" id="IPR035903">
    <property type="entry name" value="HesB-like_dom_sf"/>
</dbReference>
<dbReference type="InterPro" id="IPR001075">
    <property type="entry name" value="NIF_FeS_clus_asmbl_NifU_C"/>
</dbReference>
<dbReference type="NCBIfam" id="NF008392">
    <property type="entry name" value="PRK11190.1"/>
    <property type="match status" value="1"/>
</dbReference>
<dbReference type="NCBIfam" id="TIGR03341">
    <property type="entry name" value="YhgI_GntY"/>
    <property type="match status" value="1"/>
</dbReference>
<dbReference type="PANTHER" id="PTHR11178:SF51">
    <property type="entry name" value="FE_S BIOGENESIS PROTEIN NFUA"/>
    <property type="match status" value="1"/>
</dbReference>
<dbReference type="PANTHER" id="PTHR11178">
    <property type="entry name" value="IRON-SULFUR CLUSTER SCAFFOLD PROTEIN NFU-RELATED"/>
    <property type="match status" value="1"/>
</dbReference>
<dbReference type="Pfam" id="PF01521">
    <property type="entry name" value="Fe-S_biosyn"/>
    <property type="match status" value="1"/>
</dbReference>
<dbReference type="Pfam" id="PF01106">
    <property type="entry name" value="NifU"/>
    <property type="match status" value="1"/>
</dbReference>
<dbReference type="SUPFAM" id="SSF117916">
    <property type="entry name" value="Fe-S cluster assembly (FSCA) domain-like"/>
    <property type="match status" value="1"/>
</dbReference>
<dbReference type="SUPFAM" id="SSF89360">
    <property type="entry name" value="HesB-like domain"/>
    <property type="match status" value="1"/>
</dbReference>
<comment type="function">
    <text evidence="1">Involved in iron-sulfur cluster biogenesis. Binds a 4Fe-4S cluster, can transfer this cluster to apoproteins, and thereby intervenes in the maturation of Fe/S proteins. Could also act as a scaffold/chaperone for damaged Fe/S proteins.</text>
</comment>
<comment type="cofactor">
    <cofactor evidence="1">
        <name>[4Fe-4S] cluster</name>
        <dbReference type="ChEBI" id="CHEBI:49883"/>
    </cofactor>
    <text evidence="1">Binds 1 [4Fe-4S] cluster per subunit. The cluster is presumably bound at the interface of two monomers.</text>
</comment>
<comment type="subunit">
    <text evidence="1">Homodimer.</text>
</comment>
<comment type="similarity">
    <text evidence="1">Belongs to the NfuA family.</text>
</comment>
<accession>B7M1X0</accession>
<keyword id="KW-0004">4Fe-4S</keyword>
<keyword id="KW-0408">Iron</keyword>
<keyword id="KW-0411">Iron-sulfur</keyword>
<keyword id="KW-0479">Metal-binding</keyword>